<dbReference type="EMBL" id="AF509067">
    <property type="status" value="NOT_ANNOTATED_CDS"/>
    <property type="molecule type" value="Genomic_DNA"/>
</dbReference>
<dbReference type="SMR" id="P0C5T9"/>
<dbReference type="GO" id="GO:0042025">
    <property type="term" value="C:host cell nucleus"/>
    <property type="evidence" value="ECO:0007669"/>
    <property type="project" value="UniProtKB-SubCell"/>
</dbReference>
<dbReference type="GO" id="GO:0044423">
    <property type="term" value="C:virion component"/>
    <property type="evidence" value="ECO:0007669"/>
    <property type="project" value="UniProtKB-UniRule"/>
</dbReference>
<dbReference type="GO" id="GO:0039675">
    <property type="term" value="P:exit of virus from host cell nucleus through nuclear pore"/>
    <property type="evidence" value="ECO:0007669"/>
    <property type="project" value="UniProtKB-UniRule"/>
</dbReference>
<dbReference type="Gene3D" id="1.10.287.230">
    <property type="match status" value="1"/>
</dbReference>
<dbReference type="Gene3D" id="1.10.287.10">
    <property type="entry name" value="S15/NS1, RNA-binding"/>
    <property type="match status" value="1"/>
</dbReference>
<dbReference type="HAMAP" id="MF_04067">
    <property type="entry name" value="INFV_NEP"/>
    <property type="match status" value="1"/>
</dbReference>
<dbReference type="InterPro" id="IPR000968">
    <property type="entry name" value="Flu_NS2"/>
</dbReference>
<dbReference type="Pfam" id="PF00601">
    <property type="entry name" value="Flu_NS2"/>
    <property type="match status" value="1"/>
</dbReference>
<dbReference type="SUPFAM" id="SSF101156">
    <property type="entry name" value="Nonstructural protein ns2, Nep, M1-binding domain"/>
    <property type="match status" value="1"/>
</dbReference>
<organism>
    <name type="scientific">Influenza A virus (strain A/Chicken/Hong Kong/YU562/2001 H5N1 genotype B)</name>
    <dbReference type="NCBI Taxonomy" id="196426"/>
    <lineage>
        <taxon>Viruses</taxon>
        <taxon>Riboviria</taxon>
        <taxon>Orthornavirae</taxon>
        <taxon>Negarnaviricota</taxon>
        <taxon>Polyploviricotina</taxon>
        <taxon>Insthoviricetes</taxon>
        <taxon>Articulavirales</taxon>
        <taxon>Orthomyxoviridae</taxon>
        <taxon>Alphainfluenzavirus</taxon>
        <taxon>Alphainfluenzavirus influenzae</taxon>
        <taxon>Influenza A virus</taxon>
    </lineage>
</organism>
<protein>
    <recommendedName>
        <fullName evidence="1">Nuclear export protein</fullName>
        <shortName evidence="1">NEP</shortName>
    </recommendedName>
    <alternativeName>
        <fullName evidence="1">Non-structural protein 2</fullName>
        <shortName evidence="1">NS2</shortName>
    </alternativeName>
</protein>
<organismHost>
    <name type="scientific">Aves</name>
    <dbReference type="NCBI Taxonomy" id="8782"/>
</organismHost>
<organismHost>
    <name type="scientific">Felis catus</name>
    <name type="common">Cat</name>
    <name type="synonym">Felis silvestris catus</name>
    <dbReference type="NCBI Taxonomy" id="9685"/>
</organismHost>
<organismHost>
    <name type="scientific">Homo sapiens</name>
    <name type="common">Human</name>
    <dbReference type="NCBI Taxonomy" id="9606"/>
</organismHost>
<organismHost>
    <name type="scientific">Panthera pardus</name>
    <name type="common">Leopard</name>
    <name type="synonym">Felis pardus</name>
    <dbReference type="NCBI Taxonomy" id="9691"/>
</organismHost>
<organismHost>
    <name type="scientific">Panthera tigris</name>
    <name type="common">Tiger</name>
    <dbReference type="NCBI Taxonomy" id="9694"/>
</organismHost>
<organismHost>
    <name type="scientific">Sus scrofa</name>
    <name type="common">Pig</name>
    <dbReference type="NCBI Taxonomy" id="9823"/>
</organismHost>
<evidence type="ECO:0000255" key="1">
    <source>
        <dbReference type="HAMAP-Rule" id="MF_04067"/>
    </source>
</evidence>
<accession>P0C5T9</accession>
<keyword id="KW-0025">Alternative splicing</keyword>
<keyword id="KW-1048">Host nucleus</keyword>
<keyword id="KW-0945">Host-virus interaction</keyword>
<keyword id="KW-0813">Transport</keyword>
<keyword id="KW-0946">Virion</keyword>
<comment type="function">
    <text evidence="1">Mediates the nuclear export of encapsidated genomic RNAs (ribonucleoproteins, RNPs). Acts as an adapter between viral RNPs complexes and the nuclear export machinery of the cell. Possesses no intrinsic RNA-binding activity, but includes a C-terminal M1-binding domain. This domain is believed to allow recognition of RNPs bound to the protein M1. Since protein M1 is not available in large quantities before late stages of infection, such an indirect recognition mechanism probably ensures that genomic RNPs are not exported from the host nucleus until sufficient quantities of viral mRNA and progeny genomic RNA have been synthesized. Furthermore, the RNPs enter the host cytoplasm only when associated with the M1 protein that is necessary to guide them to the plasma membrane. May down-regulate viral RNA synthesis when overproduced.</text>
</comment>
<comment type="subunit">
    <text evidence="1">Interacts with protein M1. May interact with host nucleoporin RAB/HRB and exportin XPO1/CRM1.</text>
</comment>
<comment type="subcellular location">
    <subcellularLocation>
        <location evidence="1">Virion</location>
    </subcellularLocation>
    <subcellularLocation>
        <location evidence="1">Host nucleus</location>
    </subcellularLocation>
</comment>
<comment type="alternative products">
    <event type="alternative splicing"/>
    <isoform>
        <id>P0C5T9-1</id>
        <name>NEP</name>
        <name>NS2</name>
        <sequence type="displayed"/>
    </isoform>
    <isoform>
        <id>Q809Y0-1</id>
        <name>NS1</name>
        <sequence type="external"/>
    </isoform>
</comment>
<comment type="miscellaneous">
    <text>Average number present in a viral particle is estimated to be 130-200 molecules.</text>
</comment>
<comment type="similarity">
    <text evidence="1">Belongs to the influenza viruses NEP family.</text>
</comment>
<proteinExistence type="inferred from homology"/>
<gene>
    <name evidence="1" type="primary">NS</name>
</gene>
<feature type="chain" id="PRO_0000311729" description="Nuclear export protein">
    <location>
        <begin position="1"/>
        <end position="121"/>
    </location>
</feature>
<feature type="short sequence motif" description="Nuclear export signal" evidence="1">
    <location>
        <begin position="12"/>
        <end position="21"/>
    </location>
</feature>
<feature type="short sequence motif" description="Nuclear export signal" evidence="1">
    <location>
        <begin position="85"/>
        <end position="94"/>
    </location>
</feature>
<name>NEP_I01A1</name>
<reference key="1">
    <citation type="journal article" date="2002" name="Proc. Natl. Acad. Sci. U.S.A.">
        <title>Emergence of multiple genotypes of H5N1 avian influenza viruses in Hong Kong SAR.</title>
        <authorList>
            <person name="Guan Y."/>
            <person name="Peiris J.S.M."/>
            <person name="Lipatov A.S."/>
            <person name="Ellis T.M."/>
            <person name="Dyrting K.C."/>
            <person name="Krauss S."/>
            <person name="Zhang L.J."/>
            <person name="Webster R.G."/>
            <person name="Shortridge K.F."/>
        </authorList>
    </citation>
    <scope>NUCLEOTIDE SEQUENCE [GENOMIC RNA]</scope>
</reference>
<sequence length="121" mass="14302">MDSNTVSSFQDILMRMSKMQLGPSSGDLNGMITQFESLKLYRDSLGEAVMRMGDLHSLQIRNGKWREQLSQKFEEIRWLIEEVRHRLKITENSFEQITFMQALQLLLEVEQEIRTFSFQLI</sequence>